<comment type="similarity">
    <text evidence="2">Belongs to the HGH1 family.</text>
</comment>
<sequence length="393" mass="42916">MRGPGVGSGFSGERGLLEQEAGADTEAVELLPFLVLGARADLQAAAAQHVLALTGAGSGRTLLAGQPELLRALVDLAVAPAPAPSRDASRALVNLAADPNVHWQLLAADPELPARLLRCVLDPQWPWAEEAAAVLANLSREPAPCAALMEKLMAAEPERLGLERLVNALCTPSYNAAAPLHYLGPLLSNLSQQAEVRAFLLDPDRCVVQRLLPLTQYTDSSVRRGGVVGTLRNCCFEHRHHKWLLGAQVDILPFLLLPLAGPEEFSEEEMDQLPVDLQYLSPDKQREPDADIRKMLIEAVMLLTATAPGRKQVRDQGAYLILRELHSWEPEPDVRMACEKLIQVLIGDEPEAGMENLLEVQVPEDVEQQLQELDQQEQQELAQELRGNGAPHT</sequence>
<accession>Q8C3I8</accession>
<accession>Q9JJF4</accession>
<name>HGH1_MOUSE</name>
<evidence type="ECO:0000250" key="1">
    <source>
        <dbReference type="UniProtKB" id="Q9BTY7"/>
    </source>
</evidence>
<evidence type="ECO:0000305" key="2"/>
<gene>
    <name type="primary">Hgh1</name>
    <name type="synonym">Brp16</name>
    <name type="synonym">Fam203a</name>
    <name type="ORF">MNCb-5873</name>
</gene>
<proteinExistence type="evidence at protein level"/>
<protein>
    <recommendedName>
        <fullName>Protein HGH1 homolog</fullName>
    </recommendedName>
</protein>
<organism>
    <name type="scientific">Mus musculus</name>
    <name type="common">Mouse</name>
    <dbReference type="NCBI Taxonomy" id="10090"/>
    <lineage>
        <taxon>Eukaryota</taxon>
        <taxon>Metazoa</taxon>
        <taxon>Chordata</taxon>
        <taxon>Craniata</taxon>
        <taxon>Vertebrata</taxon>
        <taxon>Euteleostomi</taxon>
        <taxon>Mammalia</taxon>
        <taxon>Eutheria</taxon>
        <taxon>Euarchontoglires</taxon>
        <taxon>Glires</taxon>
        <taxon>Rodentia</taxon>
        <taxon>Myomorpha</taxon>
        <taxon>Muroidea</taxon>
        <taxon>Muridae</taxon>
        <taxon>Murinae</taxon>
        <taxon>Mus</taxon>
        <taxon>Mus</taxon>
    </lineage>
</organism>
<feature type="chain" id="PRO_0000273319" description="Protein HGH1 homolog">
    <location>
        <begin position="1"/>
        <end position="393"/>
    </location>
</feature>
<feature type="modified residue" description="Phosphoserine" evidence="1">
    <location>
        <position position="221"/>
    </location>
</feature>
<feature type="sequence conflict" description="In Ref. 1; BAA95037." evidence="2" ref="1">
    <original>A</original>
    <variation>S</variation>
    <location>
        <position position="72"/>
    </location>
</feature>
<feature type="sequence conflict" description="In Ref. 1; BAA95037." evidence="2" ref="1">
    <original>Y</original>
    <variation>C</variation>
    <location>
        <position position="182"/>
    </location>
</feature>
<reference key="1">
    <citation type="submission" date="2000-04" db="EMBL/GenBank/DDBJ databases">
        <title>Isolation of full-length cDNA clones from mouse brain cDNA library made by oligo-capping method.</title>
        <authorList>
            <person name="Osada N."/>
            <person name="Kusuda J."/>
            <person name="Tanuma R."/>
            <person name="Ito A."/>
            <person name="Hirata M."/>
            <person name="Sugano S."/>
            <person name="Hashimoto K."/>
        </authorList>
    </citation>
    <scope>NUCLEOTIDE SEQUENCE [LARGE SCALE MRNA]</scope>
    <source>
        <strain>C57BL/6J</strain>
        <tissue>Brain</tissue>
    </source>
</reference>
<reference key="2">
    <citation type="journal article" date="2005" name="Science">
        <title>The transcriptional landscape of the mammalian genome.</title>
        <authorList>
            <person name="Carninci P."/>
            <person name="Kasukawa T."/>
            <person name="Katayama S."/>
            <person name="Gough J."/>
            <person name="Frith M.C."/>
            <person name="Maeda N."/>
            <person name="Oyama R."/>
            <person name="Ravasi T."/>
            <person name="Lenhard B."/>
            <person name="Wells C."/>
            <person name="Kodzius R."/>
            <person name="Shimokawa K."/>
            <person name="Bajic V.B."/>
            <person name="Brenner S.E."/>
            <person name="Batalov S."/>
            <person name="Forrest A.R."/>
            <person name="Zavolan M."/>
            <person name="Davis M.J."/>
            <person name="Wilming L.G."/>
            <person name="Aidinis V."/>
            <person name="Allen J.E."/>
            <person name="Ambesi-Impiombato A."/>
            <person name="Apweiler R."/>
            <person name="Aturaliya R.N."/>
            <person name="Bailey T.L."/>
            <person name="Bansal M."/>
            <person name="Baxter L."/>
            <person name="Beisel K.W."/>
            <person name="Bersano T."/>
            <person name="Bono H."/>
            <person name="Chalk A.M."/>
            <person name="Chiu K.P."/>
            <person name="Choudhary V."/>
            <person name="Christoffels A."/>
            <person name="Clutterbuck D.R."/>
            <person name="Crowe M.L."/>
            <person name="Dalla E."/>
            <person name="Dalrymple B.P."/>
            <person name="de Bono B."/>
            <person name="Della Gatta G."/>
            <person name="di Bernardo D."/>
            <person name="Down T."/>
            <person name="Engstrom P."/>
            <person name="Fagiolini M."/>
            <person name="Faulkner G."/>
            <person name="Fletcher C.F."/>
            <person name="Fukushima T."/>
            <person name="Furuno M."/>
            <person name="Futaki S."/>
            <person name="Gariboldi M."/>
            <person name="Georgii-Hemming P."/>
            <person name="Gingeras T.R."/>
            <person name="Gojobori T."/>
            <person name="Green R.E."/>
            <person name="Gustincich S."/>
            <person name="Harbers M."/>
            <person name="Hayashi Y."/>
            <person name="Hensch T.K."/>
            <person name="Hirokawa N."/>
            <person name="Hill D."/>
            <person name="Huminiecki L."/>
            <person name="Iacono M."/>
            <person name="Ikeo K."/>
            <person name="Iwama A."/>
            <person name="Ishikawa T."/>
            <person name="Jakt M."/>
            <person name="Kanapin A."/>
            <person name="Katoh M."/>
            <person name="Kawasawa Y."/>
            <person name="Kelso J."/>
            <person name="Kitamura H."/>
            <person name="Kitano H."/>
            <person name="Kollias G."/>
            <person name="Krishnan S.P."/>
            <person name="Kruger A."/>
            <person name="Kummerfeld S.K."/>
            <person name="Kurochkin I.V."/>
            <person name="Lareau L.F."/>
            <person name="Lazarevic D."/>
            <person name="Lipovich L."/>
            <person name="Liu J."/>
            <person name="Liuni S."/>
            <person name="McWilliam S."/>
            <person name="Madan Babu M."/>
            <person name="Madera M."/>
            <person name="Marchionni L."/>
            <person name="Matsuda H."/>
            <person name="Matsuzawa S."/>
            <person name="Miki H."/>
            <person name="Mignone F."/>
            <person name="Miyake S."/>
            <person name="Morris K."/>
            <person name="Mottagui-Tabar S."/>
            <person name="Mulder N."/>
            <person name="Nakano N."/>
            <person name="Nakauchi H."/>
            <person name="Ng P."/>
            <person name="Nilsson R."/>
            <person name="Nishiguchi S."/>
            <person name="Nishikawa S."/>
            <person name="Nori F."/>
            <person name="Ohara O."/>
            <person name="Okazaki Y."/>
            <person name="Orlando V."/>
            <person name="Pang K.C."/>
            <person name="Pavan W.J."/>
            <person name="Pavesi G."/>
            <person name="Pesole G."/>
            <person name="Petrovsky N."/>
            <person name="Piazza S."/>
            <person name="Reed J."/>
            <person name="Reid J.F."/>
            <person name="Ring B.Z."/>
            <person name="Ringwald M."/>
            <person name="Rost B."/>
            <person name="Ruan Y."/>
            <person name="Salzberg S.L."/>
            <person name="Sandelin A."/>
            <person name="Schneider C."/>
            <person name="Schoenbach C."/>
            <person name="Sekiguchi K."/>
            <person name="Semple C.A."/>
            <person name="Seno S."/>
            <person name="Sessa L."/>
            <person name="Sheng Y."/>
            <person name="Shibata Y."/>
            <person name="Shimada H."/>
            <person name="Shimada K."/>
            <person name="Silva D."/>
            <person name="Sinclair B."/>
            <person name="Sperling S."/>
            <person name="Stupka E."/>
            <person name="Sugiura K."/>
            <person name="Sultana R."/>
            <person name="Takenaka Y."/>
            <person name="Taki K."/>
            <person name="Tammoja K."/>
            <person name="Tan S.L."/>
            <person name="Tang S."/>
            <person name="Taylor M.S."/>
            <person name="Tegner J."/>
            <person name="Teichmann S.A."/>
            <person name="Ueda H.R."/>
            <person name="van Nimwegen E."/>
            <person name="Verardo R."/>
            <person name="Wei C.L."/>
            <person name="Yagi K."/>
            <person name="Yamanishi H."/>
            <person name="Zabarovsky E."/>
            <person name="Zhu S."/>
            <person name="Zimmer A."/>
            <person name="Hide W."/>
            <person name="Bult C."/>
            <person name="Grimmond S.M."/>
            <person name="Teasdale R.D."/>
            <person name="Liu E.T."/>
            <person name="Brusic V."/>
            <person name="Quackenbush J."/>
            <person name="Wahlestedt C."/>
            <person name="Mattick J.S."/>
            <person name="Hume D.A."/>
            <person name="Kai C."/>
            <person name="Sasaki D."/>
            <person name="Tomaru Y."/>
            <person name="Fukuda S."/>
            <person name="Kanamori-Katayama M."/>
            <person name="Suzuki M."/>
            <person name="Aoki J."/>
            <person name="Arakawa T."/>
            <person name="Iida J."/>
            <person name="Imamura K."/>
            <person name="Itoh M."/>
            <person name="Kato T."/>
            <person name="Kawaji H."/>
            <person name="Kawagashira N."/>
            <person name="Kawashima T."/>
            <person name="Kojima M."/>
            <person name="Kondo S."/>
            <person name="Konno H."/>
            <person name="Nakano K."/>
            <person name="Ninomiya N."/>
            <person name="Nishio T."/>
            <person name="Okada M."/>
            <person name="Plessy C."/>
            <person name="Shibata K."/>
            <person name="Shiraki T."/>
            <person name="Suzuki S."/>
            <person name="Tagami M."/>
            <person name="Waki K."/>
            <person name="Watahiki A."/>
            <person name="Okamura-Oho Y."/>
            <person name="Suzuki H."/>
            <person name="Kawai J."/>
            <person name="Hayashizaki Y."/>
        </authorList>
    </citation>
    <scope>NUCLEOTIDE SEQUENCE [LARGE SCALE MRNA]</scope>
    <source>
        <strain>C57BL/6J</strain>
        <tissue>Heart</tissue>
    </source>
</reference>
<reference key="3">
    <citation type="journal article" date="2004" name="Genome Res.">
        <title>The status, quality, and expansion of the NIH full-length cDNA project: the Mammalian Gene Collection (MGC).</title>
        <authorList>
            <consortium name="The MGC Project Team"/>
        </authorList>
    </citation>
    <scope>NUCLEOTIDE SEQUENCE [LARGE SCALE MRNA]</scope>
    <source>
        <tissue>Pituitary</tissue>
    </source>
</reference>
<reference key="4">
    <citation type="journal article" date="2010" name="Cell">
        <title>A tissue-specific atlas of mouse protein phosphorylation and expression.</title>
        <authorList>
            <person name="Huttlin E.L."/>
            <person name="Jedrychowski M.P."/>
            <person name="Elias J.E."/>
            <person name="Goswami T."/>
            <person name="Rad R."/>
            <person name="Beausoleil S.A."/>
            <person name="Villen J."/>
            <person name="Haas W."/>
            <person name="Sowa M.E."/>
            <person name="Gygi S.P."/>
        </authorList>
    </citation>
    <scope>IDENTIFICATION BY MASS SPECTROMETRY [LARGE SCALE ANALYSIS]</scope>
    <source>
        <tissue>Spleen</tissue>
        <tissue>Testis</tissue>
    </source>
</reference>
<dbReference type="EMBL" id="AB041552">
    <property type="protein sequence ID" value="BAA95037.1"/>
    <property type="molecule type" value="mRNA"/>
</dbReference>
<dbReference type="EMBL" id="AK085815">
    <property type="protein sequence ID" value="BAC39539.1"/>
    <property type="molecule type" value="mRNA"/>
</dbReference>
<dbReference type="EMBL" id="BC061251">
    <property type="protein sequence ID" value="AAH61251.1"/>
    <property type="molecule type" value="mRNA"/>
</dbReference>
<dbReference type="CCDS" id="CCDS27569.1"/>
<dbReference type="RefSeq" id="NP_067530.2">
    <property type="nucleotide sequence ID" value="NM_021555.3"/>
</dbReference>
<dbReference type="SMR" id="Q8C3I8"/>
<dbReference type="BioGRID" id="208516">
    <property type="interactions" value="31"/>
</dbReference>
<dbReference type="FunCoup" id="Q8C3I8">
    <property type="interactions" value="454"/>
</dbReference>
<dbReference type="IntAct" id="Q8C3I8">
    <property type="interactions" value="3"/>
</dbReference>
<dbReference type="MINT" id="Q8C3I8"/>
<dbReference type="STRING" id="10090.ENSMUSP00000023213"/>
<dbReference type="iPTMnet" id="Q8C3I8"/>
<dbReference type="PhosphoSitePlus" id="Q8C3I8"/>
<dbReference type="SwissPalm" id="Q8C3I8"/>
<dbReference type="PaxDb" id="10090-ENSMUSP00000023213"/>
<dbReference type="PeptideAtlas" id="Q8C3I8"/>
<dbReference type="ProteomicsDB" id="269566"/>
<dbReference type="Pumba" id="Q8C3I8"/>
<dbReference type="Antibodypedia" id="28319">
    <property type="antibodies" value="153 antibodies from 27 providers"/>
</dbReference>
<dbReference type="DNASU" id="59053"/>
<dbReference type="Ensembl" id="ENSMUST00000023213.8">
    <property type="protein sequence ID" value="ENSMUSP00000023213.7"/>
    <property type="gene ID" value="ENSMUSG00000022554.8"/>
</dbReference>
<dbReference type="GeneID" id="59053"/>
<dbReference type="KEGG" id="mmu:59053"/>
<dbReference type="UCSC" id="uc007wjz.2">
    <property type="organism name" value="mouse"/>
</dbReference>
<dbReference type="AGR" id="MGI:1930628"/>
<dbReference type="CTD" id="51236"/>
<dbReference type="MGI" id="MGI:1930628">
    <property type="gene designation" value="Hgh1"/>
</dbReference>
<dbReference type="VEuPathDB" id="HostDB:ENSMUSG00000022554"/>
<dbReference type="eggNOG" id="KOG2973">
    <property type="taxonomic scope" value="Eukaryota"/>
</dbReference>
<dbReference type="GeneTree" id="ENSGT00390000016546"/>
<dbReference type="HOGENOM" id="CLU_037769_3_0_1"/>
<dbReference type="InParanoid" id="Q8C3I8"/>
<dbReference type="OMA" id="MCILLTN"/>
<dbReference type="OrthoDB" id="338814at2759"/>
<dbReference type="PhylomeDB" id="Q8C3I8"/>
<dbReference type="TreeFam" id="TF313296"/>
<dbReference type="BioGRID-ORCS" id="59053">
    <property type="hits" value="4 hits in 78 CRISPR screens"/>
</dbReference>
<dbReference type="ChiTaRS" id="Hgh1">
    <property type="organism name" value="mouse"/>
</dbReference>
<dbReference type="PRO" id="PR:Q8C3I8"/>
<dbReference type="Proteomes" id="UP000000589">
    <property type="component" value="Chromosome 15"/>
</dbReference>
<dbReference type="RNAct" id="Q8C3I8">
    <property type="molecule type" value="protein"/>
</dbReference>
<dbReference type="Bgee" id="ENSMUSG00000022554">
    <property type="expression patterns" value="Expressed in paneth cell and 228 other cell types or tissues"/>
</dbReference>
<dbReference type="Gene3D" id="1.25.10.10">
    <property type="entry name" value="Leucine-rich Repeat Variant"/>
    <property type="match status" value="1"/>
</dbReference>
<dbReference type="InterPro" id="IPR011989">
    <property type="entry name" value="ARM-like"/>
</dbReference>
<dbReference type="InterPro" id="IPR016024">
    <property type="entry name" value="ARM-type_fold"/>
</dbReference>
<dbReference type="InterPro" id="IPR039717">
    <property type="entry name" value="Hgh1"/>
</dbReference>
<dbReference type="InterPro" id="IPR007206">
    <property type="entry name" value="Protein_HGH1_C"/>
</dbReference>
<dbReference type="InterPro" id="IPR007205">
    <property type="entry name" value="Protein_HGH1_N"/>
</dbReference>
<dbReference type="PANTHER" id="PTHR13387">
    <property type="entry name" value="PROTEIN HGH1 HOMOLOG"/>
    <property type="match status" value="1"/>
</dbReference>
<dbReference type="PANTHER" id="PTHR13387:SF9">
    <property type="entry name" value="PROTEIN HGH1 HOMOLOG"/>
    <property type="match status" value="1"/>
</dbReference>
<dbReference type="Pfam" id="PF04063">
    <property type="entry name" value="DUF383"/>
    <property type="match status" value="1"/>
</dbReference>
<dbReference type="Pfam" id="PF04064">
    <property type="entry name" value="DUF384"/>
    <property type="match status" value="1"/>
</dbReference>
<dbReference type="SUPFAM" id="SSF48371">
    <property type="entry name" value="ARM repeat"/>
    <property type="match status" value="1"/>
</dbReference>
<keyword id="KW-0597">Phosphoprotein</keyword>
<keyword id="KW-1185">Reference proteome</keyword>